<organism>
    <name type="scientific">Salmonella typhi</name>
    <dbReference type="NCBI Taxonomy" id="90370"/>
    <lineage>
        <taxon>Bacteria</taxon>
        <taxon>Pseudomonadati</taxon>
        <taxon>Pseudomonadota</taxon>
        <taxon>Gammaproteobacteria</taxon>
        <taxon>Enterobacterales</taxon>
        <taxon>Enterobacteriaceae</taxon>
        <taxon>Salmonella</taxon>
    </lineage>
</organism>
<name>MSRB_SALTI</name>
<keyword id="KW-0479">Metal-binding</keyword>
<keyword id="KW-0560">Oxidoreductase</keyword>
<keyword id="KW-0862">Zinc</keyword>
<proteinExistence type="inferred from homology"/>
<protein>
    <recommendedName>
        <fullName evidence="1">Peptide methionine sulfoxide reductase MsrB</fullName>
        <ecNumber evidence="1">1.8.4.12</ecNumber>
    </recommendedName>
    <alternativeName>
        <fullName evidence="1">Peptide-methionine (R)-S-oxide reductase</fullName>
    </alternativeName>
</protein>
<dbReference type="EC" id="1.8.4.12" evidence="1"/>
<dbReference type="EMBL" id="AL513382">
    <property type="protein sequence ID" value="CAD02063.1"/>
    <property type="status" value="ALT_INIT"/>
    <property type="molecule type" value="Genomic_DNA"/>
</dbReference>
<dbReference type="EMBL" id="AE014613">
    <property type="protein sequence ID" value="AAO68827.1"/>
    <property type="status" value="ALT_INIT"/>
    <property type="molecule type" value="Genomic_DNA"/>
</dbReference>
<dbReference type="PIR" id="AF0711">
    <property type="entry name" value="AF0711"/>
</dbReference>
<dbReference type="RefSeq" id="NP_456221.1">
    <property type="nucleotide sequence ID" value="NC_003198.1"/>
</dbReference>
<dbReference type="RefSeq" id="WP_001519539.1">
    <property type="nucleotide sequence ID" value="NZ_WSUR01000034.1"/>
</dbReference>
<dbReference type="SMR" id="P65450"/>
<dbReference type="STRING" id="220341.gene:17585755"/>
<dbReference type="KEGG" id="stt:t1170"/>
<dbReference type="KEGG" id="sty:STY1824"/>
<dbReference type="PATRIC" id="fig|220341.7.peg.1836"/>
<dbReference type="eggNOG" id="COG0229">
    <property type="taxonomic scope" value="Bacteria"/>
</dbReference>
<dbReference type="HOGENOM" id="CLU_031040_8_5_6"/>
<dbReference type="OMA" id="YDETTDW"/>
<dbReference type="Proteomes" id="UP000000541">
    <property type="component" value="Chromosome"/>
</dbReference>
<dbReference type="Proteomes" id="UP000002670">
    <property type="component" value="Chromosome"/>
</dbReference>
<dbReference type="GO" id="GO:0005737">
    <property type="term" value="C:cytoplasm"/>
    <property type="evidence" value="ECO:0007669"/>
    <property type="project" value="TreeGrafter"/>
</dbReference>
<dbReference type="GO" id="GO:0033743">
    <property type="term" value="F:peptide-methionine (R)-S-oxide reductase activity"/>
    <property type="evidence" value="ECO:0007669"/>
    <property type="project" value="UniProtKB-UniRule"/>
</dbReference>
<dbReference type="GO" id="GO:0008270">
    <property type="term" value="F:zinc ion binding"/>
    <property type="evidence" value="ECO:0007669"/>
    <property type="project" value="UniProtKB-UniRule"/>
</dbReference>
<dbReference type="GO" id="GO:0030091">
    <property type="term" value="P:protein repair"/>
    <property type="evidence" value="ECO:0007669"/>
    <property type="project" value="InterPro"/>
</dbReference>
<dbReference type="GO" id="GO:0006979">
    <property type="term" value="P:response to oxidative stress"/>
    <property type="evidence" value="ECO:0007669"/>
    <property type="project" value="InterPro"/>
</dbReference>
<dbReference type="FunFam" id="2.170.150.20:FF:000001">
    <property type="entry name" value="Peptide methionine sulfoxide reductase MsrB"/>
    <property type="match status" value="1"/>
</dbReference>
<dbReference type="Gene3D" id="2.170.150.20">
    <property type="entry name" value="Peptide methionine sulfoxide reductase"/>
    <property type="match status" value="1"/>
</dbReference>
<dbReference type="HAMAP" id="MF_01400">
    <property type="entry name" value="MsrB"/>
    <property type="match status" value="1"/>
</dbReference>
<dbReference type="InterPro" id="IPR028427">
    <property type="entry name" value="Met_Sox_Rdtase_MsrB"/>
</dbReference>
<dbReference type="InterPro" id="IPR002579">
    <property type="entry name" value="Met_Sox_Rdtase_MsrB_dom"/>
</dbReference>
<dbReference type="InterPro" id="IPR011057">
    <property type="entry name" value="Mss4-like_sf"/>
</dbReference>
<dbReference type="NCBIfam" id="TIGR00357">
    <property type="entry name" value="peptide-methionine (R)-S-oxide reductase MsrB"/>
    <property type="match status" value="1"/>
</dbReference>
<dbReference type="PANTHER" id="PTHR10173">
    <property type="entry name" value="METHIONINE SULFOXIDE REDUCTASE"/>
    <property type="match status" value="1"/>
</dbReference>
<dbReference type="PANTHER" id="PTHR10173:SF52">
    <property type="entry name" value="METHIONINE-R-SULFOXIDE REDUCTASE B1"/>
    <property type="match status" value="1"/>
</dbReference>
<dbReference type="Pfam" id="PF01641">
    <property type="entry name" value="SelR"/>
    <property type="match status" value="1"/>
</dbReference>
<dbReference type="SUPFAM" id="SSF51316">
    <property type="entry name" value="Mss4-like"/>
    <property type="match status" value="1"/>
</dbReference>
<dbReference type="PROSITE" id="PS51790">
    <property type="entry name" value="MSRB"/>
    <property type="match status" value="1"/>
</dbReference>
<evidence type="ECO:0000255" key="1">
    <source>
        <dbReference type="HAMAP-Rule" id="MF_01400"/>
    </source>
</evidence>
<evidence type="ECO:0000255" key="2">
    <source>
        <dbReference type="PROSITE-ProRule" id="PRU01126"/>
    </source>
</evidence>
<evidence type="ECO:0000305" key="3"/>
<accession>P65450</accession>
<accession>Q8XGD3</accession>
<gene>
    <name evidence="1" type="primary">msrB</name>
    <name type="ordered locus">STY1824</name>
    <name type="ordered locus">t1170</name>
</gene>
<comment type="catalytic activity">
    <reaction evidence="1">
        <text>L-methionyl-[protein] + [thioredoxin]-disulfide + H2O = L-methionyl-(R)-S-oxide-[protein] + [thioredoxin]-dithiol</text>
        <dbReference type="Rhea" id="RHEA:24164"/>
        <dbReference type="Rhea" id="RHEA-COMP:10698"/>
        <dbReference type="Rhea" id="RHEA-COMP:10700"/>
        <dbReference type="Rhea" id="RHEA-COMP:12313"/>
        <dbReference type="Rhea" id="RHEA-COMP:12314"/>
        <dbReference type="ChEBI" id="CHEBI:15377"/>
        <dbReference type="ChEBI" id="CHEBI:16044"/>
        <dbReference type="ChEBI" id="CHEBI:29950"/>
        <dbReference type="ChEBI" id="CHEBI:45764"/>
        <dbReference type="ChEBI" id="CHEBI:50058"/>
        <dbReference type="EC" id="1.8.4.12"/>
    </reaction>
</comment>
<comment type="cofactor">
    <cofactor evidence="1">
        <name>Zn(2+)</name>
        <dbReference type="ChEBI" id="CHEBI:29105"/>
    </cofactor>
    <text evidence="1">Binds 1 zinc ion per subunit. The zinc ion is important for the structural integrity of the protein.</text>
</comment>
<comment type="similarity">
    <text evidence="1">Belongs to the MsrB Met sulfoxide reductase family.</text>
</comment>
<comment type="sequence caution" evidence="3">
    <conflict type="erroneous initiation">
        <sequence resource="EMBL-CDS" id="AAO68827"/>
    </conflict>
</comment>
<comment type="sequence caution" evidence="3">
    <conflict type="erroneous initiation">
        <sequence resource="EMBL-CDS" id="CAD02063"/>
    </conflict>
</comment>
<reference key="1">
    <citation type="journal article" date="2001" name="Nature">
        <title>Complete genome sequence of a multiple drug resistant Salmonella enterica serovar Typhi CT18.</title>
        <authorList>
            <person name="Parkhill J."/>
            <person name="Dougan G."/>
            <person name="James K.D."/>
            <person name="Thomson N.R."/>
            <person name="Pickard D."/>
            <person name="Wain J."/>
            <person name="Churcher C.M."/>
            <person name="Mungall K.L."/>
            <person name="Bentley S.D."/>
            <person name="Holden M.T.G."/>
            <person name="Sebaihia M."/>
            <person name="Baker S."/>
            <person name="Basham D."/>
            <person name="Brooks K."/>
            <person name="Chillingworth T."/>
            <person name="Connerton P."/>
            <person name="Cronin A."/>
            <person name="Davis P."/>
            <person name="Davies R.M."/>
            <person name="Dowd L."/>
            <person name="White N."/>
            <person name="Farrar J."/>
            <person name="Feltwell T."/>
            <person name="Hamlin N."/>
            <person name="Haque A."/>
            <person name="Hien T.T."/>
            <person name="Holroyd S."/>
            <person name="Jagels K."/>
            <person name="Krogh A."/>
            <person name="Larsen T.S."/>
            <person name="Leather S."/>
            <person name="Moule S."/>
            <person name="O'Gaora P."/>
            <person name="Parry C."/>
            <person name="Quail M.A."/>
            <person name="Rutherford K.M."/>
            <person name="Simmonds M."/>
            <person name="Skelton J."/>
            <person name="Stevens K."/>
            <person name="Whitehead S."/>
            <person name="Barrell B.G."/>
        </authorList>
    </citation>
    <scope>NUCLEOTIDE SEQUENCE [LARGE SCALE GENOMIC DNA]</scope>
    <source>
        <strain>CT18</strain>
    </source>
</reference>
<reference key="2">
    <citation type="journal article" date="2003" name="J. Bacteriol.">
        <title>Comparative genomics of Salmonella enterica serovar Typhi strains Ty2 and CT18.</title>
        <authorList>
            <person name="Deng W."/>
            <person name="Liou S.-R."/>
            <person name="Plunkett G. III"/>
            <person name="Mayhew G.F."/>
            <person name="Rose D.J."/>
            <person name="Burland V."/>
            <person name="Kodoyianni V."/>
            <person name="Schwartz D.C."/>
            <person name="Blattner F.R."/>
        </authorList>
    </citation>
    <scope>NUCLEOTIDE SEQUENCE [LARGE SCALE GENOMIC DNA]</scope>
    <source>
        <strain>ATCC 700931 / Ty2</strain>
    </source>
</reference>
<sequence>MANQPSAEELKKKLSEMQFYVTQDRGTEPPFTGRLLHNKRDGVYHCLVCDTPLFHSHTKYDSGCGWPSFYQPVSEEAIRYIDDFSHGMQRVEIRCGNCDAHLGHVFPDGPQPTGERYCVNSASLAFSDEKNGDQLKG</sequence>
<feature type="chain" id="PRO_0000140293" description="Peptide methionine sulfoxide reductase MsrB">
    <location>
        <begin position="1"/>
        <end position="137"/>
    </location>
</feature>
<feature type="domain" description="MsrB" evidence="2">
    <location>
        <begin position="7"/>
        <end position="129"/>
    </location>
</feature>
<feature type="active site" description="Nucleophile" evidence="2">
    <location>
        <position position="118"/>
    </location>
</feature>
<feature type="binding site" evidence="2">
    <location>
        <position position="46"/>
    </location>
    <ligand>
        <name>Zn(2+)</name>
        <dbReference type="ChEBI" id="CHEBI:29105"/>
    </ligand>
</feature>
<feature type="binding site" evidence="2">
    <location>
        <position position="49"/>
    </location>
    <ligand>
        <name>Zn(2+)</name>
        <dbReference type="ChEBI" id="CHEBI:29105"/>
    </ligand>
</feature>
<feature type="binding site" evidence="2">
    <location>
        <position position="95"/>
    </location>
    <ligand>
        <name>Zn(2+)</name>
        <dbReference type="ChEBI" id="CHEBI:29105"/>
    </ligand>
</feature>
<feature type="binding site" evidence="2">
    <location>
        <position position="98"/>
    </location>
    <ligand>
        <name>Zn(2+)</name>
        <dbReference type="ChEBI" id="CHEBI:29105"/>
    </ligand>
</feature>